<reference key="1">
    <citation type="journal article" date="2001" name="Nature">
        <title>Complete genome sequence of Salmonella enterica serovar Typhimurium LT2.</title>
        <authorList>
            <person name="McClelland M."/>
            <person name="Sanderson K.E."/>
            <person name="Spieth J."/>
            <person name="Clifton S.W."/>
            <person name="Latreille P."/>
            <person name="Courtney L."/>
            <person name="Porwollik S."/>
            <person name="Ali J."/>
            <person name="Dante M."/>
            <person name="Du F."/>
            <person name="Hou S."/>
            <person name="Layman D."/>
            <person name="Leonard S."/>
            <person name="Nguyen C."/>
            <person name="Scott K."/>
            <person name="Holmes A."/>
            <person name="Grewal N."/>
            <person name="Mulvaney E."/>
            <person name="Ryan E."/>
            <person name="Sun H."/>
            <person name="Florea L."/>
            <person name="Miller W."/>
            <person name="Stoneking T."/>
            <person name="Nhan M."/>
            <person name="Waterston R."/>
            <person name="Wilson R.K."/>
        </authorList>
    </citation>
    <scope>NUCLEOTIDE SEQUENCE [LARGE SCALE GENOMIC DNA]</scope>
    <source>
        <strain>LT2 / SGSC1412 / ATCC 700720</strain>
    </source>
</reference>
<sequence length="466" mass="51608">MPHSWDYDAVVIGSGPGGEGAAMGLVKQGARVAVIERYHNVGGGCTHWGTIPSKALRHAVSRIIEFNQNPLYSDHSRLLRSSFADILNHADNVINQQTRMRQGFYERNHCEILQGNAHFIDEHTLALECHDGTVETLTAEKFVIACGSRPYHPNDVDFSHPRIYDSDSILSLHHEPRHVIIYGAGVIGCEYASIFRGMDVKVDLINTRDRLLAFLDQEMSDSLSYHFWNSGVVIRHNEEYEKIEGCDDGVIMHLKSGKKLKADCLLYANGRTGNTDSLALENIGLETDSRGQLKVNSMYQTALPHVYAVGDVIGYPSLASAAYDQGRIAAQALVKGEATAHLIEDIPTGIYTIPEISSVGKTEQQLTAMKVPYEVGRAQFKHLARAQIVGMNVGTLKILFHRETKEILGIHCFGERAAEIIHIGQAIMEQKGGGNTIEYFVNTTFNYPTMAEAYRVAALNGLNRLF</sequence>
<evidence type="ECO:0000250" key="1"/>
<evidence type="ECO:0000255" key="2">
    <source>
        <dbReference type="HAMAP-Rule" id="MF_00247"/>
    </source>
</evidence>
<keyword id="KW-0963">Cytoplasm</keyword>
<keyword id="KW-0274">FAD</keyword>
<keyword id="KW-0285">Flavoprotein</keyword>
<keyword id="KW-0520">NAD</keyword>
<keyword id="KW-0521">NADP</keyword>
<keyword id="KW-0560">Oxidoreductase</keyword>
<keyword id="KW-1185">Reference proteome</keyword>
<accession>P66008</accession>
<accession>Q8XFP5</accession>
<organism>
    <name type="scientific">Salmonella typhimurium (strain LT2 / SGSC1412 / ATCC 700720)</name>
    <dbReference type="NCBI Taxonomy" id="99287"/>
    <lineage>
        <taxon>Bacteria</taxon>
        <taxon>Pseudomonadati</taxon>
        <taxon>Pseudomonadota</taxon>
        <taxon>Gammaproteobacteria</taxon>
        <taxon>Enterobacterales</taxon>
        <taxon>Enterobacteriaceae</taxon>
        <taxon>Salmonella</taxon>
    </lineage>
</organism>
<gene>
    <name evidence="2" type="primary">sthA</name>
    <name evidence="2" type="synonym">udhA</name>
    <name type="ordered locus">STM4126</name>
</gene>
<comment type="function">
    <text evidence="2">Conversion of NADPH, generated by peripheral catabolic pathways, to NADH, which can enter the respiratory chain for energy generation.</text>
</comment>
<comment type="catalytic activity">
    <reaction evidence="2">
        <text>NAD(+) + NADPH = NADH + NADP(+)</text>
        <dbReference type="Rhea" id="RHEA:11692"/>
        <dbReference type="ChEBI" id="CHEBI:57540"/>
        <dbReference type="ChEBI" id="CHEBI:57783"/>
        <dbReference type="ChEBI" id="CHEBI:57945"/>
        <dbReference type="ChEBI" id="CHEBI:58349"/>
        <dbReference type="EC" id="1.6.1.1"/>
    </reaction>
</comment>
<comment type="cofactor">
    <cofactor evidence="2">
        <name>FAD</name>
        <dbReference type="ChEBI" id="CHEBI:57692"/>
    </cofactor>
    <text evidence="2">Binds 1 FAD per subunit.</text>
</comment>
<comment type="subunit">
    <text evidence="1">Homooligomer; probable homooctamer.</text>
</comment>
<comment type="subcellular location">
    <subcellularLocation>
        <location evidence="2">Cytoplasm</location>
    </subcellularLocation>
</comment>
<comment type="similarity">
    <text evidence="2">Belongs to the class-I pyridine nucleotide-disulfide oxidoreductase family.</text>
</comment>
<proteinExistence type="inferred from homology"/>
<feature type="initiator methionine" description="Removed" evidence="1">
    <location>
        <position position="1"/>
    </location>
</feature>
<feature type="chain" id="PRO_0000068072" description="Soluble pyridine nucleotide transhydrogenase">
    <location>
        <begin position="2"/>
        <end position="466"/>
    </location>
</feature>
<feature type="binding site" evidence="2">
    <location>
        <begin position="36"/>
        <end position="45"/>
    </location>
    <ligand>
        <name>FAD</name>
        <dbReference type="ChEBI" id="CHEBI:57692"/>
    </ligand>
</feature>
<name>STHA_SALTY</name>
<dbReference type="EC" id="1.6.1.1" evidence="2"/>
<dbReference type="EMBL" id="AE006468">
    <property type="protein sequence ID" value="AAL22964.1"/>
    <property type="molecule type" value="Genomic_DNA"/>
</dbReference>
<dbReference type="RefSeq" id="NP_463005.1">
    <property type="nucleotide sequence ID" value="NC_003197.2"/>
</dbReference>
<dbReference type="RefSeq" id="WP_001120789.1">
    <property type="nucleotide sequence ID" value="NC_003197.2"/>
</dbReference>
<dbReference type="SMR" id="P66008"/>
<dbReference type="STRING" id="99287.STM4126"/>
<dbReference type="PaxDb" id="99287-STM4126"/>
<dbReference type="DNASU" id="1255652"/>
<dbReference type="GeneID" id="1255652"/>
<dbReference type="GeneID" id="66758375"/>
<dbReference type="KEGG" id="stm:STM4126"/>
<dbReference type="PATRIC" id="fig|99287.12.peg.4347"/>
<dbReference type="HOGENOM" id="CLU_016755_0_0_6"/>
<dbReference type="OMA" id="SHCLMAV"/>
<dbReference type="PhylomeDB" id="P66008"/>
<dbReference type="BioCyc" id="SENT99287:STM4126-MONOMER"/>
<dbReference type="Proteomes" id="UP000001014">
    <property type="component" value="Chromosome"/>
</dbReference>
<dbReference type="GO" id="GO:0005829">
    <property type="term" value="C:cytosol"/>
    <property type="evidence" value="ECO:0000318"/>
    <property type="project" value="GO_Central"/>
</dbReference>
<dbReference type="GO" id="GO:0004148">
    <property type="term" value="F:dihydrolipoyl dehydrogenase (NADH) activity"/>
    <property type="evidence" value="ECO:0000318"/>
    <property type="project" value="GO_Central"/>
</dbReference>
<dbReference type="GO" id="GO:0050660">
    <property type="term" value="F:flavin adenine dinucleotide binding"/>
    <property type="evidence" value="ECO:0000318"/>
    <property type="project" value="GO_Central"/>
</dbReference>
<dbReference type="GO" id="GO:0003957">
    <property type="term" value="F:NAD(P)+ transhydrogenase (Si-specific) activity"/>
    <property type="evidence" value="ECO:0007669"/>
    <property type="project" value="UniProtKB-UniRule"/>
</dbReference>
<dbReference type="GO" id="GO:0006103">
    <property type="term" value="P:2-oxoglutarate metabolic process"/>
    <property type="evidence" value="ECO:0000318"/>
    <property type="project" value="GO_Central"/>
</dbReference>
<dbReference type="GO" id="GO:0006739">
    <property type="term" value="P:NADP metabolic process"/>
    <property type="evidence" value="ECO:0007669"/>
    <property type="project" value="UniProtKB-UniRule"/>
</dbReference>
<dbReference type="GO" id="GO:0006090">
    <property type="term" value="P:pyruvate metabolic process"/>
    <property type="evidence" value="ECO:0000318"/>
    <property type="project" value="GO_Central"/>
</dbReference>
<dbReference type="FunFam" id="3.30.390.30:FF:000002">
    <property type="entry name" value="Soluble pyridine nucleotide transhydrogenase"/>
    <property type="match status" value="1"/>
</dbReference>
<dbReference type="FunFam" id="3.50.50.60:FF:000008">
    <property type="entry name" value="Soluble pyridine nucleotide transhydrogenase"/>
    <property type="match status" value="1"/>
</dbReference>
<dbReference type="Gene3D" id="3.30.390.30">
    <property type="match status" value="1"/>
</dbReference>
<dbReference type="Gene3D" id="3.50.50.60">
    <property type="entry name" value="FAD/NAD(P)-binding domain"/>
    <property type="match status" value="2"/>
</dbReference>
<dbReference type="HAMAP" id="MF_00247">
    <property type="entry name" value="SthA"/>
    <property type="match status" value="1"/>
</dbReference>
<dbReference type="InterPro" id="IPR050151">
    <property type="entry name" value="Class-I_Pyr_Nuc-Dis_Oxidored"/>
</dbReference>
<dbReference type="InterPro" id="IPR036188">
    <property type="entry name" value="FAD/NAD-bd_sf"/>
</dbReference>
<dbReference type="InterPro" id="IPR023753">
    <property type="entry name" value="FAD/NAD-binding_dom"/>
</dbReference>
<dbReference type="InterPro" id="IPR016156">
    <property type="entry name" value="FAD/NAD-linked_Rdtase_dimer_sf"/>
</dbReference>
<dbReference type="InterPro" id="IPR001100">
    <property type="entry name" value="Pyr_nuc-diS_OxRdtase"/>
</dbReference>
<dbReference type="InterPro" id="IPR004099">
    <property type="entry name" value="Pyr_nucl-diS_OxRdtase_dimer"/>
</dbReference>
<dbReference type="InterPro" id="IPR022962">
    <property type="entry name" value="STH_gammaproteobact"/>
</dbReference>
<dbReference type="NCBIfam" id="NF003585">
    <property type="entry name" value="PRK05249.1"/>
    <property type="match status" value="1"/>
</dbReference>
<dbReference type="PANTHER" id="PTHR22912">
    <property type="entry name" value="DISULFIDE OXIDOREDUCTASE"/>
    <property type="match status" value="1"/>
</dbReference>
<dbReference type="PANTHER" id="PTHR22912:SF93">
    <property type="entry name" value="SOLUBLE PYRIDINE NUCLEOTIDE TRANSHYDROGENASE"/>
    <property type="match status" value="1"/>
</dbReference>
<dbReference type="Pfam" id="PF07992">
    <property type="entry name" value="Pyr_redox_2"/>
    <property type="match status" value="1"/>
</dbReference>
<dbReference type="Pfam" id="PF02852">
    <property type="entry name" value="Pyr_redox_dim"/>
    <property type="match status" value="1"/>
</dbReference>
<dbReference type="PIRSF" id="PIRSF000350">
    <property type="entry name" value="Mercury_reductase_MerA"/>
    <property type="match status" value="1"/>
</dbReference>
<dbReference type="PRINTS" id="PR00368">
    <property type="entry name" value="FADPNR"/>
</dbReference>
<dbReference type="PRINTS" id="PR00411">
    <property type="entry name" value="PNDRDTASEI"/>
</dbReference>
<dbReference type="SUPFAM" id="SSF51905">
    <property type="entry name" value="FAD/NAD(P)-binding domain"/>
    <property type="match status" value="1"/>
</dbReference>
<dbReference type="SUPFAM" id="SSF55424">
    <property type="entry name" value="FAD/NAD-linked reductases, dimerisation (C-terminal) domain"/>
    <property type="match status" value="1"/>
</dbReference>
<protein>
    <recommendedName>
        <fullName evidence="2">Soluble pyridine nucleotide transhydrogenase</fullName>
        <shortName evidence="2">STH</shortName>
        <ecNumber evidence="2">1.6.1.1</ecNumber>
    </recommendedName>
    <alternativeName>
        <fullName evidence="2">NAD(P)(+) transhydrogenase [B-specific]</fullName>
    </alternativeName>
</protein>